<evidence type="ECO:0000255" key="1">
    <source>
        <dbReference type="HAMAP-Rule" id="MF_01600"/>
    </source>
</evidence>
<evidence type="ECO:0000256" key="2">
    <source>
        <dbReference type="SAM" id="MobiDB-lite"/>
    </source>
</evidence>
<dbReference type="EMBL" id="AP008957">
    <property type="protein sequence ID" value="BAH32939.1"/>
    <property type="molecule type" value="Genomic_DNA"/>
</dbReference>
<dbReference type="SMR" id="C0ZX54"/>
<dbReference type="KEGG" id="rer:RER_22310"/>
<dbReference type="eggNOG" id="COG1615">
    <property type="taxonomic scope" value="Bacteria"/>
</dbReference>
<dbReference type="HOGENOM" id="CLU_007733_1_0_11"/>
<dbReference type="Proteomes" id="UP000002204">
    <property type="component" value="Chromosome"/>
</dbReference>
<dbReference type="GO" id="GO:0005576">
    <property type="term" value="C:extracellular region"/>
    <property type="evidence" value="ECO:0007669"/>
    <property type="project" value="TreeGrafter"/>
</dbReference>
<dbReference type="GO" id="GO:0005886">
    <property type="term" value="C:plasma membrane"/>
    <property type="evidence" value="ECO:0007669"/>
    <property type="project" value="UniProtKB-SubCell"/>
</dbReference>
<dbReference type="HAMAP" id="MF_01600">
    <property type="entry name" value="UPF0182"/>
    <property type="match status" value="1"/>
</dbReference>
<dbReference type="InterPro" id="IPR005372">
    <property type="entry name" value="UPF0182"/>
</dbReference>
<dbReference type="NCBIfam" id="NF000825">
    <property type="entry name" value="PRK00068.1"/>
    <property type="match status" value="1"/>
</dbReference>
<dbReference type="NCBIfam" id="NF009097">
    <property type="entry name" value="PRK12438.1"/>
    <property type="match status" value="1"/>
</dbReference>
<dbReference type="PANTHER" id="PTHR39344">
    <property type="entry name" value="UPF0182 PROTEIN SLL1060"/>
    <property type="match status" value="1"/>
</dbReference>
<dbReference type="PANTHER" id="PTHR39344:SF1">
    <property type="entry name" value="UPF0182 PROTEIN SLL1060"/>
    <property type="match status" value="1"/>
</dbReference>
<dbReference type="Pfam" id="PF03699">
    <property type="entry name" value="UPF0182"/>
    <property type="match status" value="1"/>
</dbReference>
<keyword id="KW-1003">Cell membrane</keyword>
<keyword id="KW-0472">Membrane</keyword>
<keyword id="KW-0812">Transmembrane</keyword>
<keyword id="KW-1133">Transmembrane helix</keyword>
<gene>
    <name type="ordered locus">RER_22310</name>
</gene>
<comment type="subcellular location">
    <subcellularLocation>
        <location evidence="1">Cell membrane</location>
        <topology evidence="1">Multi-pass membrane protein</topology>
    </subcellularLocation>
</comment>
<comment type="similarity">
    <text evidence="1">Belongs to the UPF0182 family.</text>
</comment>
<accession>C0ZX54</accession>
<proteinExistence type="inferred from homology"/>
<sequence>MRPPAGLPSLSRRSRILLVVAVVVAALLLVGPRLIGMYTDWLWFGEVGYRGVFTKVLLTRFVLFLVVGIVVGAIVWLAMLLAYRARPVFVPVSGPNDPIARYRTTVMSRLRLFGVIIPVAIGILSGLIAQANWVTIQLFLNGQPFGITDPQFNLDVGFYTFDLPFYRFVLNWLFVSILLAFVANLVTHYVFGGIKLAGRAGTFTTAARVQLAVIAGTFVLLKAVAYWFDRYSLMSSSRKEPTFTGPGFTDINAVLPAKLILLSIAVICALAFFASIFTRDLRIPAMAVALLVLSSVLVGAVYPMIVEQFSVKPNAAQKESTYIERNIEATRQAYGITEENVDYVDYPGVGTKQPQDVPADRTTIANTRLLDPTILSPTFTAQRQLKNFYGFPQTLNVDRYEQDGQLRDFVVAARELSPNNLSGNQTDWINKHTVYTHGNGFVAAQANEVTAVQGDSQNNTGGYPIYSVSDLTTTPENENLKVDNPRSYYGEVISQSDADYSIVGSVDGEGPREYDTDTSKYTYTGSGGVSIGNWFNRLAFAAKYTERNILFSSAIGSNSKIIFKRDPKERVEEVAPWLTTDGAAYPAVVDGKMQWIIDGYTTAQDYPYAQRSSLDGLVEDSIDQTTGRLIPRQEFSYIRNSVKATVDAYDGTVTLYQVDEQDPVLKAWMGVFPNTVKPKSEISDDLQAHFRYPEDMFKVQREMLAKYHVDDPSEFFTNNAFWSVPSDPTIDTSANQPPYYVLVGDKDTAKADFRLTSPMVGFSRELLSAYISVANDKENYGKFTVLQLPTDTQTQGPQQAQSAMTSDSRVASEVSLLKQSNKIQYGNLLTLPIAEGGILYVEPLYSQRNSQNAFPQLARVLVSFSDTNGIRIGYAPTVSEAISQIWPGAGSAATVTQPAPDPDTGAQPETPTTPTAPAPPASSDDVTKALAEVNSAMAALKSAQQSGDFTSYGAALDRLQKAVDAYQALPR</sequence>
<name>Y2231_RHOE4</name>
<feature type="chain" id="PRO_1000215684" description="UPF0182 protein RER_22310">
    <location>
        <begin position="1"/>
        <end position="971"/>
    </location>
</feature>
<feature type="transmembrane region" description="Helical" evidence="1">
    <location>
        <begin position="16"/>
        <end position="36"/>
    </location>
</feature>
<feature type="transmembrane region" description="Helical" evidence="1">
    <location>
        <begin position="61"/>
        <end position="81"/>
    </location>
</feature>
<feature type="transmembrane region" description="Helical" evidence="1">
    <location>
        <begin position="112"/>
        <end position="132"/>
    </location>
</feature>
<feature type="transmembrane region" description="Helical" evidence="1">
    <location>
        <begin position="172"/>
        <end position="192"/>
    </location>
</feature>
<feature type="transmembrane region" description="Helical" evidence="1">
    <location>
        <begin position="209"/>
        <end position="229"/>
    </location>
</feature>
<feature type="transmembrane region" description="Helical" evidence="1">
    <location>
        <begin position="257"/>
        <end position="277"/>
    </location>
</feature>
<feature type="transmembrane region" description="Helical" evidence="1">
    <location>
        <begin position="286"/>
        <end position="306"/>
    </location>
</feature>
<feature type="region of interest" description="Disordered" evidence="2">
    <location>
        <begin position="890"/>
        <end position="927"/>
    </location>
</feature>
<protein>
    <recommendedName>
        <fullName evidence="1">UPF0182 protein RER_22310</fullName>
    </recommendedName>
</protein>
<organism>
    <name type="scientific">Rhodococcus erythropolis (strain PR4 / NBRC 100887)</name>
    <dbReference type="NCBI Taxonomy" id="234621"/>
    <lineage>
        <taxon>Bacteria</taxon>
        <taxon>Bacillati</taxon>
        <taxon>Actinomycetota</taxon>
        <taxon>Actinomycetes</taxon>
        <taxon>Mycobacteriales</taxon>
        <taxon>Nocardiaceae</taxon>
        <taxon>Rhodococcus</taxon>
        <taxon>Rhodococcus erythropolis group</taxon>
    </lineage>
</organism>
<reference key="1">
    <citation type="submission" date="2005-03" db="EMBL/GenBank/DDBJ databases">
        <title>Comparison of the complete genome sequences of Rhodococcus erythropolis PR4 and Rhodococcus opacus B4.</title>
        <authorList>
            <person name="Takarada H."/>
            <person name="Sekine M."/>
            <person name="Hosoyama A."/>
            <person name="Yamada R."/>
            <person name="Fujisawa T."/>
            <person name="Omata S."/>
            <person name="Shimizu A."/>
            <person name="Tsukatani N."/>
            <person name="Tanikawa S."/>
            <person name="Fujita N."/>
            <person name="Harayama S."/>
        </authorList>
    </citation>
    <scope>NUCLEOTIDE SEQUENCE [LARGE SCALE GENOMIC DNA]</scope>
    <source>
        <strain>PR4 / NBRC 100887</strain>
    </source>
</reference>